<comment type="similarity">
    <text evidence="1">Belongs to the chorismate pyruvate-lyase type 2 family.</text>
</comment>
<reference key="1">
    <citation type="journal article" date="1996" name="Science">
        <title>Complete genome sequence of the methanogenic archaeon, Methanococcus jannaschii.</title>
        <authorList>
            <person name="Bult C.J."/>
            <person name="White O."/>
            <person name="Olsen G.J."/>
            <person name="Zhou L."/>
            <person name="Fleischmann R.D."/>
            <person name="Sutton G.G."/>
            <person name="Blake J.A."/>
            <person name="FitzGerald L.M."/>
            <person name="Clayton R.A."/>
            <person name="Gocayne J.D."/>
            <person name="Kerlavage A.R."/>
            <person name="Dougherty B.A."/>
            <person name="Tomb J.-F."/>
            <person name="Adams M.D."/>
            <person name="Reich C.I."/>
            <person name="Overbeek R."/>
            <person name="Kirkness E.F."/>
            <person name="Weinstock K.G."/>
            <person name="Merrick J.M."/>
            <person name="Glodek A."/>
            <person name="Scott J.L."/>
            <person name="Geoghagen N.S.M."/>
            <person name="Weidman J.F."/>
            <person name="Fuhrmann J.L."/>
            <person name="Nguyen D."/>
            <person name="Utterback T.R."/>
            <person name="Kelley J.M."/>
            <person name="Peterson J.D."/>
            <person name="Sadow P.W."/>
            <person name="Hanna M.C."/>
            <person name="Cotton M.D."/>
            <person name="Roberts K.M."/>
            <person name="Hurst M.A."/>
            <person name="Kaine B.P."/>
            <person name="Borodovsky M."/>
            <person name="Klenk H.-P."/>
            <person name="Fraser C.M."/>
            <person name="Smith H.O."/>
            <person name="Woese C.R."/>
            <person name="Venter J.C."/>
        </authorList>
    </citation>
    <scope>NUCLEOTIDE SEQUENCE [LARGE SCALE GENOMIC DNA]</scope>
    <source>
        <strain>ATCC 43067 / DSM 2661 / JAL-1 / JCM 10045 / NBRC 100440</strain>
    </source>
</reference>
<dbReference type="EC" id="4.1.-.-"/>
<dbReference type="EMBL" id="L77117">
    <property type="protein sequence ID" value="AAB98807.1"/>
    <property type="molecule type" value="Genomic_DNA"/>
</dbReference>
<dbReference type="PIR" id="G64400">
    <property type="entry name" value="G64400"/>
</dbReference>
<dbReference type="SMR" id="Q58217"/>
<dbReference type="STRING" id="243232.MJ_0807"/>
<dbReference type="PaxDb" id="243232-MJ_0807"/>
<dbReference type="EnsemblBacteria" id="AAB98807">
    <property type="protein sequence ID" value="AAB98807"/>
    <property type="gene ID" value="MJ_0807"/>
</dbReference>
<dbReference type="KEGG" id="mja:MJ_0807"/>
<dbReference type="eggNOG" id="arCOG01031">
    <property type="taxonomic scope" value="Archaea"/>
</dbReference>
<dbReference type="HOGENOM" id="CLU_107938_2_0_2"/>
<dbReference type="InParanoid" id="Q58217"/>
<dbReference type="PhylomeDB" id="Q58217"/>
<dbReference type="BioCyc" id="MetaCyc:MONOMER-18799"/>
<dbReference type="Proteomes" id="UP000000805">
    <property type="component" value="Chromosome"/>
</dbReference>
<dbReference type="GO" id="GO:0016829">
    <property type="term" value="F:lyase activity"/>
    <property type="evidence" value="ECO:0007669"/>
    <property type="project" value="UniProtKB-KW"/>
</dbReference>
<dbReference type="Gene3D" id="3.40.1410.10">
    <property type="entry name" value="Chorismate lyase-like"/>
    <property type="match status" value="1"/>
</dbReference>
<dbReference type="InterPro" id="IPR028978">
    <property type="entry name" value="Chorismate_lyase_/UTRA_dom_sf"/>
</dbReference>
<dbReference type="InterPro" id="IPR002800">
    <property type="entry name" value="Rv2949c-like"/>
</dbReference>
<dbReference type="Pfam" id="PF01947">
    <property type="entry name" value="Rv2949c-like"/>
    <property type="match status" value="1"/>
</dbReference>
<dbReference type="SUPFAM" id="SSF64288">
    <property type="entry name" value="Chorismate lyase-like"/>
    <property type="match status" value="1"/>
</dbReference>
<keyword id="KW-0456">Lyase</keyword>
<keyword id="KW-1185">Reference proteome</keyword>
<proteinExistence type="inferred from homology"/>
<organism>
    <name type="scientific">Methanocaldococcus jannaschii (strain ATCC 43067 / DSM 2661 / JAL-1 / JCM 10045 / NBRC 100440)</name>
    <name type="common">Methanococcus jannaschii</name>
    <dbReference type="NCBI Taxonomy" id="243232"/>
    <lineage>
        <taxon>Archaea</taxon>
        <taxon>Methanobacteriati</taxon>
        <taxon>Methanobacteriota</taxon>
        <taxon>Methanomada group</taxon>
        <taxon>Methanococci</taxon>
        <taxon>Methanococcales</taxon>
        <taxon>Methanocaldococcaceae</taxon>
        <taxon>Methanocaldococcus</taxon>
    </lineage>
</organism>
<evidence type="ECO:0000305" key="1"/>
<feature type="chain" id="PRO_0000107056" description="Putative lyase MJ0807">
    <location>
        <begin position="1"/>
        <end position="184"/>
    </location>
</feature>
<protein>
    <recommendedName>
        <fullName>Putative lyase MJ0807</fullName>
        <ecNumber>4.1.-.-</ecNumber>
    </recommendedName>
</protein>
<gene>
    <name type="ordered locus">MJ0807</name>
</gene>
<sequence length="184" mass="21548">MQKTKLRLIFMIIYKEIAKLNKTFPLLNEEKILLGTDGSVTNILEILFEGECRVETINQKIVANTNYREVILKVNNIPLVYAVSKTPFKNIEEENLREEIKRDLLSADIPIGKIIRKHNLETRREIKYIGIAEIDDYLKSLLKTNYSRLPKRTYNIIYKNKVLMEITEIFAVRGKLVKNTYSID</sequence>
<accession>Q58217</accession>
<name>Y807_METJA</name>